<accession>Q5X0M0</accession>
<organism>
    <name type="scientific">Legionella pneumophila (strain Paris)</name>
    <dbReference type="NCBI Taxonomy" id="297246"/>
    <lineage>
        <taxon>Bacteria</taxon>
        <taxon>Pseudomonadati</taxon>
        <taxon>Pseudomonadota</taxon>
        <taxon>Gammaproteobacteria</taxon>
        <taxon>Legionellales</taxon>
        <taxon>Legionellaceae</taxon>
        <taxon>Legionella</taxon>
    </lineage>
</organism>
<name>RNPA_LEGPA</name>
<reference key="1">
    <citation type="journal article" date="2004" name="Nat. Genet.">
        <title>Evidence in the Legionella pneumophila genome for exploitation of host cell functions and high genome plasticity.</title>
        <authorList>
            <person name="Cazalet C."/>
            <person name="Rusniok C."/>
            <person name="Brueggemann H."/>
            <person name="Zidane N."/>
            <person name="Magnier A."/>
            <person name="Ma L."/>
            <person name="Tichit M."/>
            <person name="Jarraud S."/>
            <person name="Bouchier C."/>
            <person name="Vandenesch F."/>
            <person name="Kunst F."/>
            <person name="Etienne J."/>
            <person name="Glaser P."/>
            <person name="Buchrieser C."/>
        </authorList>
    </citation>
    <scope>NUCLEOTIDE SEQUENCE [LARGE SCALE GENOMIC DNA]</scope>
    <source>
        <strain>Paris</strain>
    </source>
</reference>
<keyword id="KW-0255">Endonuclease</keyword>
<keyword id="KW-0378">Hydrolase</keyword>
<keyword id="KW-0540">Nuclease</keyword>
<keyword id="KW-0694">RNA-binding</keyword>
<keyword id="KW-0819">tRNA processing</keyword>
<gene>
    <name evidence="1" type="primary">rnpA</name>
    <name type="ordered locus">lpp3076</name>
</gene>
<feature type="chain" id="PRO_0000198476" description="Ribonuclease P protein component">
    <location>
        <begin position="1"/>
        <end position="114"/>
    </location>
</feature>
<evidence type="ECO:0000255" key="1">
    <source>
        <dbReference type="HAMAP-Rule" id="MF_00227"/>
    </source>
</evidence>
<protein>
    <recommendedName>
        <fullName evidence="1">Ribonuclease P protein component</fullName>
        <shortName evidence="1">RNase P protein</shortName>
        <shortName evidence="1">RNaseP protein</shortName>
        <ecNumber evidence="1">3.1.26.5</ecNumber>
    </recommendedName>
    <alternativeName>
        <fullName evidence="1">Protein C5</fullName>
    </alternativeName>
</protein>
<proteinExistence type="inferred from homology"/>
<comment type="function">
    <text evidence="1">RNaseP catalyzes the removal of the 5'-leader sequence from pre-tRNA to produce the mature 5'-terminus. It can also cleave other RNA substrates such as 4.5S RNA. The protein component plays an auxiliary but essential role in vivo by binding to the 5'-leader sequence and broadening the substrate specificity of the ribozyme.</text>
</comment>
<comment type="catalytic activity">
    <reaction evidence="1">
        <text>Endonucleolytic cleavage of RNA, removing 5'-extranucleotides from tRNA precursor.</text>
        <dbReference type="EC" id="3.1.26.5"/>
    </reaction>
</comment>
<comment type="subunit">
    <text evidence="1">Consists of a catalytic RNA component (M1 or rnpB) and a protein subunit.</text>
</comment>
<comment type="similarity">
    <text evidence="1">Belongs to the RnpA family.</text>
</comment>
<dbReference type="EC" id="3.1.26.5" evidence="1"/>
<dbReference type="EMBL" id="CR628336">
    <property type="protein sequence ID" value="CAH14229.1"/>
    <property type="molecule type" value="Genomic_DNA"/>
</dbReference>
<dbReference type="RefSeq" id="WP_011947894.1">
    <property type="nucleotide sequence ID" value="NC_006368.1"/>
</dbReference>
<dbReference type="SMR" id="Q5X0M0"/>
<dbReference type="GeneID" id="57037009"/>
<dbReference type="KEGG" id="lpp:lpp3076"/>
<dbReference type="LegioList" id="lpp3076"/>
<dbReference type="HOGENOM" id="CLU_117179_11_0_6"/>
<dbReference type="GO" id="GO:0030677">
    <property type="term" value="C:ribonuclease P complex"/>
    <property type="evidence" value="ECO:0007669"/>
    <property type="project" value="TreeGrafter"/>
</dbReference>
<dbReference type="GO" id="GO:0042781">
    <property type="term" value="F:3'-tRNA processing endoribonuclease activity"/>
    <property type="evidence" value="ECO:0007669"/>
    <property type="project" value="TreeGrafter"/>
</dbReference>
<dbReference type="GO" id="GO:0004526">
    <property type="term" value="F:ribonuclease P activity"/>
    <property type="evidence" value="ECO:0007669"/>
    <property type="project" value="UniProtKB-UniRule"/>
</dbReference>
<dbReference type="GO" id="GO:0000049">
    <property type="term" value="F:tRNA binding"/>
    <property type="evidence" value="ECO:0007669"/>
    <property type="project" value="UniProtKB-UniRule"/>
</dbReference>
<dbReference type="GO" id="GO:0001682">
    <property type="term" value="P:tRNA 5'-leader removal"/>
    <property type="evidence" value="ECO:0007669"/>
    <property type="project" value="UniProtKB-UniRule"/>
</dbReference>
<dbReference type="Gene3D" id="3.30.230.10">
    <property type="match status" value="1"/>
</dbReference>
<dbReference type="HAMAP" id="MF_00227">
    <property type="entry name" value="RNase_P"/>
    <property type="match status" value="1"/>
</dbReference>
<dbReference type="InterPro" id="IPR020568">
    <property type="entry name" value="Ribosomal_Su5_D2-typ_SF"/>
</dbReference>
<dbReference type="InterPro" id="IPR014721">
    <property type="entry name" value="Ribsml_uS5_D2-typ_fold_subgr"/>
</dbReference>
<dbReference type="InterPro" id="IPR000100">
    <property type="entry name" value="RNase_P"/>
</dbReference>
<dbReference type="InterPro" id="IPR020539">
    <property type="entry name" value="RNase_P_CS"/>
</dbReference>
<dbReference type="NCBIfam" id="TIGR00188">
    <property type="entry name" value="rnpA"/>
    <property type="match status" value="1"/>
</dbReference>
<dbReference type="PANTHER" id="PTHR33992">
    <property type="entry name" value="RIBONUCLEASE P PROTEIN COMPONENT"/>
    <property type="match status" value="1"/>
</dbReference>
<dbReference type="PANTHER" id="PTHR33992:SF1">
    <property type="entry name" value="RIBONUCLEASE P PROTEIN COMPONENT"/>
    <property type="match status" value="1"/>
</dbReference>
<dbReference type="Pfam" id="PF00825">
    <property type="entry name" value="Ribonuclease_P"/>
    <property type="match status" value="1"/>
</dbReference>
<dbReference type="SUPFAM" id="SSF54211">
    <property type="entry name" value="Ribosomal protein S5 domain 2-like"/>
    <property type="match status" value="1"/>
</dbReference>
<dbReference type="PROSITE" id="PS00648">
    <property type="entry name" value="RIBONUCLEASE_P"/>
    <property type="match status" value="1"/>
</dbReference>
<sequence length="114" mass="13231">MFAFKKAQRLLKKNDFDFVFESAKKITTDDFIFLFRENKLGYARLGLALSKKMIAKAHDRNRIKRLLRESFRHTNLPAVDIIILARPGLAKKTNLGINTKLNKTWEKLASCYGK</sequence>